<feature type="chain" id="PRO_0000218453" description="Diacylglycerol kinase alpha">
    <location>
        <begin position="1"/>
        <end position="735"/>
    </location>
</feature>
<feature type="domain" description="EF-hand 1" evidence="4">
    <location>
        <begin position="110"/>
        <end position="145"/>
    </location>
</feature>
<feature type="domain" description="EF-hand 2" evidence="4">
    <location>
        <begin position="155"/>
        <end position="190"/>
    </location>
</feature>
<feature type="domain" description="DAGKc" evidence="5">
    <location>
        <begin position="372"/>
        <end position="506"/>
    </location>
</feature>
<feature type="zinc finger region" description="Phorbol-ester/DAG-type 1" evidence="3">
    <location>
        <begin position="205"/>
        <end position="253"/>
    </location>
</feature>
<feature type="zinc finger region" description="Phorbol-ester/DAG-type 2" evidence="3">
    <location>
        <begin position="269"/>
        <end position="319"/>
    </location>
</feature>
<feature type="binding site" evidence="4 10">
    <location>
        <position position="123"/>
    </location>
    <ligand>
        <name>Ca(2+)</name>
        <dbReference type="ChEBI" id="CHEBI:29108"/>
        <label>1</label>
    </ligand>
</feature>
<feature type="binding site" evidence="4 10">
    <location>
        <position position="125"/>
    </location>
    <ligand>
        <name>Ca(2+)</name>
        <dbReference type="ChEBI" id="CHEBI:29108"/>
        <label>1</label>
    </ligand>
</feature>
<feature type="binding site" evidence="4 10">
    <location>
        <position position="127"/>
    </location>
    <ligand>
        <name>Ca(2+)</name>
        <dbReference type="ChEBI" id="CHEBI:29108"/>
        <label>1</label>
    </ligand>
</feature>
<feature type="binding site" evidence="4 10">
    <location>
        <position position="134"/>
    </location>
    <ligand>
        <name>Ca(2+)</name>
        <dbReference type="ChEBI" id="CHEBI:29108"/>
        <label>1</label>
    </ligand>
</feature>
<feature type="binding site" evidence="4 10">
    <location>
        <position position="168"/>
    </location>
    <ligand>
        <name>Ca(2+)</name>
        <dbReference type="ChEBI" id="CHEBI:29108"/>
        <label>2</label>
    </ligand>
</feature>
<feature type="binding site" evidence="4 10">
    <location>
        <position position="170"/>
    </location>
    <ligand>
        <name>Ca(2+)</name>
        <dbReference type="ChEBI" id="CHEBI:29108"/>
        <label>2</label>
    </ligand>
</feature>
<feature type="binding site" evidence="4 10">
    <location>
        <position position="172"/>
    </location>
    <ligand>
        <name>Ca(2+)</name>
        <dbReference type="ChEBI" id="CHEBI:29108"/>
        <label>2</label>
    </ligand>
</feature>
<feature type="binding site" evidence="4 10">
    <location>
        <position position="174"/>
    </location>
    <ligand>
        <name>Ca(2+)</name>
        <dbReference type="ChEBI" id="CHEBI:29108"/>
        <label>2</label>
    </ligand>
</feature>
<feature type="binding site" evidence="4 10">
    <location>
        <position position="179"/>
    </location>
    <ligand>
        <name>Ca(2+)</name>
        <dbReference type="ChEBI" id="CHEBI:29108"/>
        <label>2</label>
    </ligand>
</feature>
<feature type="modified residue" description="N6-acetyllysine" evidence="18">
    <location>
        <position position="484"/>
    </location>
</feature>
<feature type="splice variant" id="VSP_032212" description="In isoform 2." evidence="11">
    <original>FT</original>
    <variation>WS</variation>
    <location>
        <begin position="117"/>
        <end position="118"/>
    </location>
</feature>
<feature type="splice variant" id="VSP_032213" description="In isoform 2." evidence="11">
    <location>
        <begin position="119"/>
        <end position="735"/>
    </location>
</feature>
<feature type="splice variant" id="VSP_047702" description="In isoform 3." evidence="12">
    <original>LCKYTVHDQCA</original>
    <variation>RPITCVGARRL</variation>
    <location>
        <begin position="237"/>
        <end position="247"/>
    </location>
</feature>
<feature type="splice variant" id="VSP_047703" description="In isoform 3." evidence="12">
    <location>
        <begin position="248"/>
        <end position="735"/>
    </location>
</feature>
<feature type="sequence variant" id="VAR_031563" description="In dbSNP:rs17852990." evidence="6">
    <original>H</original>
    <variation>Y</variation>
    <location>
        <position position="538"/>
    </location>
</feature>
<feature type="mutagenesis site" description="Binds calcium but with decreased affinity." evidence="10">
    <original>E</original>
    <variation>Q</variation>
    <location>
        <position position="134"/>
    </location>
</feature>
<feature type="mutagenesis site" description="Loss of calcium-binding." evidence="10">
    <original>E</original>
    <variation>Q</variation>
    <location>
        <position position="179"/>
    </location>
</feature>
<feature type="sequence conflict" description="In Ref. 2; AAC34804." evidence="13" ref="2">
    <original>L</original>
    <variation>P</variation>
    <location>
        <position position="339"/>
    </location>
</feature>
<feature type="sequence conflict" description="In Ref. 2; AAC34802." evidence="13" ref="2">
    <original>V</original>
    <variation>L</variation>
    <location>
        <position position="379"/>
    </location>
</feature>
<feature type="sequence conflict" description="In Ref. 2; AAC34802." evidence="13" ref="2">
    <original>S</original>
    <variation>W</variation>
    <location>
        <position position="385"/>
    </location>
</feature>
<feature type="sequence conflict" description="In Ref. 2; AAC34803." evidence="13" ref="2">
    <original>E</original>
    <variation>G</variation>
    <location>
        <position position="684"/>
    </location>
</feature>
<feature type="sequence conflict" description="In Ref. 1; CAA44396." evidence="13" ref="1">
    <original>G</original>
    <variation>V</variation>
    <location>
        <position position="699"/>
    </location>
</feature>
<feature type="sequence conflict" description="In Ref. 2; AAC34803." evidence="13" ref="2">
    <original>N</original>
    <variation>K</variation>
    <location>
        <position position="715"/>
    </location>
</feature>
<feature type="helix" evidence="19">
    <location>
        <begin position="10"/>
        <end position="22"/>
    </location>
</feature>
<feature type="helix" evidence="19">
    <location>
        <begin position="27"/>
        <end position="35"/>
    </location>
</feature>
<feature type="helix" evidence="19">
    <location>
        <begin position="38"/>
        <end position="42"/>
    </location>
</feature>
<feature type="helix" evidence="19">
    <location>
        <begin position="50"/>
        <end position="60"/>
    </location>
</feature>
<feature type="helix" evidence="19">
    <location>
        <begin position="68"/>
        <end position="77"/>
    </location>
</feature>
<feature type="helix" evidence="19">
    <location>
        <begin position="96"/>
        <end position="107"/>
    </location>
</feature>
<feature type="helix" evidence="20">
    <location>
        <begin position="112"/>
        <end position="122"/>
    </location>
</feature>
<feature type="strand" evidence="20">
    <location>
        <begin position="127"/>
        <end position="130"/>
    </location>
</feature>
<feature type="helix" evidence="20">
    <location>
        <begin position="132"/>
        <end position="148"/>
    </location>
</feature>
<feature type="turn" evidence="20">
    <location>
        <begin position="154"/>
        <end position="156"/>
    </location>
</feature>
<feature type="helix" evidence="20">
    <location>
        <begin position="157"/>
        <end position="167"/>
    </location>
</feature>
<feature type="strand" evidence="20">
    <location>
        <begin position="173"/>
        <end position="176"/>
    </location>
</feature>
<feature type="helix" evidence="20">
    <location>
        <begin position="177"/>
        <end position="185"/>
    </location>
</feature>
<feature type="helix" evidence="20">
    <location>
        <begin position="190"/>
        <end position="193"/>
    </location>
</feature>
<gene>
    <name type="primary">DGKA</name>
    <name type="synonym">DAGK</name>
    <name type="synonym">DAGK1</name>
</gene>
<proteinExistence type="evidence at protein level"/>
<accession>P23743</accession>
<accession>O75481</accession>
<accession>O75482</accession>
<accession>O75483</accession>
<accession>O95217</accession>
<accession>Q3ZE25</accession>
<accession>Q8IZ56</accession>
<accession>Q8N5Q2</accession>
<reference key="1">
    <citation type="journal article" date="1990" name="FEBS Lett.">
        <title>Purification, cDNA-cloning and expression of human diacylglycerol kinase.</title>
        <authorList>
            <person name="Schaap D."/>
            <person name="de Widt J."/>
            <person name="van der Wal J."/>
            <person name="Vandekerckhove J."/>
            <person name="van Damme J."/>
            <person name="Gussow D."/>
            <person name="Ploegh H.L."/>
            <person name="van Blitterswijk W.J."/>
            <person name="van der Bendl R.L."/>
        </authorList>
    </citation>
    <scope>NUCLEOTIDE SEQUENCE [MRNA] (ISOFORM 1)</scope>
    <scope>FUNCTION</scope>
    <scope>CATALYTIC ACTIVITY</scope>
    <scope>SUBSTRATE SPECIFICITY</scope>
    <scope>ACTIVITY REGULATION</scope>
    <scope>PATHWAY</scope>
    <scope>SUBUNIT</scope>
    <scope>SUBCELLULAR LOCATION</scope>
    <scope>TISSUE SPECIFICITY</scope>
    <source>
        <tissue>Lymphocyte</tissue>
    </source>
</reference>
<reference key="2">
    <citation type="submission" date="1998-05" db="EMBL/GenBank/DDBJ databases">
        <title>Alternative splicing of diacylglycerol kinase alpha expressed in human neutrophils.</title>
        <authorList>
            <person name="Champagne C.M.E."/>
            <person name="Maeda H."/>
            <person name="Takashiba S."/>
            <person name="van Dyke T.E."/>
        </authorList>
    </citation>
    <scope>NUCLEOTIDE SEQUENCE [MRNA] (ISOFORMS 1 AND 2)</scope>
    <scope>ALTERNATIVE SPLICING</scope>
    <source>
        <tissue>Uterus</tissue>
    </source>
</reference>
<reference key="3">
    <citation type="submission" date="2005-02" db="EMBL/GenBank/DDBJ databases">
        <title>Characterization of a novel DGK alpha transcript generated by alternative splicing.</title>
        <authorList>
            <person name="Batista E.L. Jr."/>
            <person name="Van Dyke T.E."/>
        </authorList>
    </citation>
    <scope>NUCLEOTIDE SEQUENCE [MRNA] (ISOFORM 3)</scope>
</reference>
<reference key="4">
    <citation type="journal article" date="2006" name="Nature">
        <title>The finished DNA sequence of human chromosome 12.</title>
        <authorList>
            <person name="Scherer S.E."/>
            <person name="Muzny D.M."/>
            <person name="Buhay C.J."/>
            <person name="Chen R."/>
            <person name="Cree A."/>
            <person name="Ding Y."/>
            <person name="Dugan-Rocha S."/>
            <person name="Gill R."/>
            <person name="Gunaratne P."/>
            <person name="Harris R.A."/>
            <person name="Hawes A.C."/>
            <person name="Hernandez J."/>
            <person name="Hodgson A.V."/>
            <person name="Hume J."/>
            <person name="Jackson A."/>
            <person name="Khan Z.M."/>
            <person name="Kovar-Smith C."/>
            <person name="Lewis L.R."/>
            <person name="Lozado R.J."/>
            <person name="Metzker M.L."/>
            <person name="Milosavljevic A."/>
            <person name="Miner G.R."/>
            <person name="Montgomery K.T."/>
            <person name="Morgan M.B."/>
            <person name="Nazareth L.V."/>
            <person name="Scott G."/>
            <person name="Sodergren E."/>
            <person name="Song X.-Z."/>
            <person name="Steffen D."/>
            <person name="Lovering R.C."/>
            <person name="Wheeler D.A."/>
            <person name="Worley K.C."/>
            <person name="Yuan Y."/>
            <person name="Zhang Z."/>
            <person name="Adams C.Q."/>
            <person name="Ansari-Lari M.A."/>
            <person name="Ayele M."/>
            <person name="Brown M.J."/>
            <person name="Chen G."/>
            <person name="Chen Z."/>
            <person name="Clerc-Blankenburg K.P."/>
            <person name="Davis C."/>
            <person name="Delgado O."/>
            <person name="Dinh H.H."/>
            <person name="Draper H."/>
            <person name="Gonzalez-Garay M.L."/>
            <person name="Havlak P."/>
            <person name="Jackson L.R."/>
            <person name="Jacob L.S."/>
            <person name="Kelly S.H."/>
            <person name="Li L."/>
            <person name="Li Z."/>
            <person name="Liu J."/>
            <person name="Liu W."/>
            <person name="Lu J."/>
            <person name="Maheshwari M."/>
            <person name="Nguyen B.-V."/>
            <person name="Okwuonu G.O."/>
            <person name="Pasternak S."/>
            <person name="Perez L.M."/>
            <person name="Plopper F.J.H."/>
            <person name="Santibanez J."/>
            <person name="Shen H."/>
            <person name="Tabor P.E."/>
            <person name="Verduzco D."/>
            <person name="Waldron L."/>
            <person name="Wang Q."/>
            <person name="Williams G.A."/>
            <person name="Zhang J."/>
            <person name="Zhou J."/>
            <person name="Allen C.C."/>
            <person name="Amin A.G."/>
            <person name="Anyalebechi V."/>
            <person name="Bailey M."/>
            <person name="Barbaria J.A."/>
            <person name="Bimage K.E."/>
            <person name="Bryant N.P."/>
            <person name="Burch P.E."/>
            <person name="Burkett C.E."/>
            <person name="Burrell K.L."/>
            <person name="Calderon E."/>
            <person name="Cardenas V."/>
            <person name="Carter K."/>
            <person name="Casias K."/>
            <person name="Cavazos I."/>
            <person name="Cavazos S.R."/>
            <person name="Ceasar H."/>
            <person name="Chacko J."/>
            <person name="Chan S.N."/>
            <person name="Chavez D."/>
            <person name="Christopoulos C."/>
            <person name="Chu J."/>
            <person name="Cockrell R."/>
            <person name="Cox C.D."/>
            <person name="Dang M."/>
            <person name="Dathorne S.R."/>
            <person name="David R."/>
            <person name="Davis C.M."/>
            <person name="Davy-Carroll L."/>
            <person name="Deshazo D.R."/>
            <person name="Donlin J.E."/>
            <person name="D'Souza L."/>
            <person name="Eaves K.A."/>
            <person name="Egan A."/>
            <person name="Emery-Cohen A.J."/>
            <person name="Escotto M."/>
            <person name="Flagg N."/>
            <person name="Forbes L.D."/>
            <person name="Gabisi A.M."/>
            <person name="Garza M."/>
            <person name="Hamilton C."/>
            <person name="Henderson N."/>
            <person name="Hernandez O."/>
            <person name="Hines S."/>
            <person name="Hogues M.E."/>
            <person name="Huang M."/>
            <person name="Idlebird D.G."/>
            <person name="Johnson R."/>
            <person name="Jolivet A."/>
            <person name="Jones S."/>
            <person name="Kagan R."/>
            <person name="King L.M."/>
            <person name="Leal B."/>
            <person name="Lebow H."/>
            <person name="Lee S."/>
            <person name="LeVan J.M."/>
            <person name="Lewis L.C."/>
            <person name="London P."/>
            <person name="Lorensuhewa L.M."/>
            <person name="Loulseged H."/>
            <person name="Lovett D.A."/>
            <person name="Lucier A."/>
            <person name="Lucier R.L."/>
            <person name="Ma J."/>
            <person name="Madu R.C."/>
            <person name="Mapua P."/>
            <person name="Martindale A.D."/>
            <person name="Martinez E."/>
            <person name="Massey E."/>
            <person name="Mawhiney S."/>
            <person name="Meador M.G."/>
            <person name="Mendez S."/>
            <person name="Mercado C."/>
            <person name="Mercado I.C."/>
            <person name="Merritt C.E."/>
            <person name="Miner Z.L."/>
            <person name="Minja E."/>
            <person name="Mitchell T."/>
            <person name="Mohabbat F."/>
            <person name="Mohabbat K."/>
            <person name="Montgomery B."/>
            <person name="Moore N."/>
            <person name="Morris S."/>
            <person name="Munidasa M."/>
            <person name="Ngo R.N."/>
            <person name="Nguyen N.B."/>
            <person name="Nickerson E."/>
            <person name="Nwaokelemeh O.O."/>
            <person name="Nwokenkwo S."/>
            <person name="Obregon M."/>
            <person name="Oguh M."/>
            <person name="Oragunye N."/>
            <person name="Oviedo R.J."/>
            <person name="Parish B.J."/>
            <person name="Parker D.N."/>
            <person name="Parrish J."/>
            <person name="Parks K.L."/>
            <person name="Paul H.A."/>
            <person name="Payton B.A."/>
            <person name="Perez A."/>
            <person name="Perrin W."/>
            <person name="Pickens A."/>
            <person name="Primus E.L."/>
            <person name="Pu L.-L."/>
            <person name="Puazo M."/>
            <person name="Quiles M.M."/>
            <person name="Quiroz J.B."/>
            <person name="Rabata D."/>
            <person name="Reeves K."/>
            <person name="Ruiz S.J."/>
            <person name="Shao H."/>
            <person name="Sisson I."/>
            <person name="Sonaike T."/>
            <person name="Sorelle R.P."/>
            <person name="Sutton A.E."/>
            <person name="Svatek A.F."/>
            <person name="Svetz L.A."/>
            <person name="Tamerisa K.S."/>
            <person name="Taylor T.R."/>
            <person name="Teague B."/>
            <person name="Thomas N."/>
            <person name="Thorn R.D."/>
            <person name="Trejos Z.Y."/>
            <person name="Trevino B.K."/>
            <person name="Ukegbu O.N."/>
            <person name="Urban J.B."/>
            <person name="Vasquez L.I."/>
            <person name="Vera V.A."/>
            <person name="Villasana D.M."/>
            <person name="Wang L."/>
            <person name="Ward-Moore S."/>
            <person name="Warren J.T."/>
            <person name="Wei X."/>
            <person name="White F."/>
            <person name="Williamson A.L."/>
            <person name="Wleczyk R."/>
            <person name="Wooden H.S."/>
            <person name="Wooden S.H."/>
            <person name="Yen J."/>
            <person name="Yoon L."/>
            <person name="Yoon V."/>
            <person name="Zorrilla S.E."/>
            <person name="Nelson D."/>
            <person name="Kucherlapati R."/>
            <person name="Weinstock G."/>
            <person name="Gibbs R.A."/>
        </authorList>
    </citation>
    <scope>NUCLEOTIDE SEQUENCE [LARGE SCALE GENOMIC DNA]</scope>
</reference>
<reference key="5">
    <citation type="journal article" date="2004" name="Genome Res.">
        <title>The status, quality, and expansion of the NIH full-length cDNA project: the Mammalian Gene Collection (MGC).</title>
        <authorList>
            <consortium name="The MGC Project Team"/>
        </authorList>
    </citation>
    <scope>NUCLEOTIDE SEQUENCE [LARGE SCALE MRNA] (ISOFORM 1)</scope>
    <scope>VARIANT TYR-538</scope>
    <source>
        <tissue>Brain</tissue>
    </source>
</reference>
<reference key="6">
    <citation type="journal article" date="1994" name="Mamm. Genome">
        <title>Assignment of the gene for diacylglycerol kinase (DAGK) to human chromosome 12.</title>
        <authorList>
            <person name="Hart T.C."/>
            <person name="Champagne C."/>
            <person name="Zhou J."/>
            <person name="van Dyke T.E."/>
        </authorList>
    </citation>
    <scope>CHROMOSOMAL LOCATION</scope>
</reference>
<reference key="7">
    <citation type="journal article" date="1994" name="Genomics">
        <title>Assignment of the human diacylglycerol kinase gene (DAGK) to 12q13.3 using fluorescence in situ hybridization analysis.</title>
        <authorList>
            <person name="Hart T.C."/>
            <person name="Zhou J."/>
            <person name="Champagne C."/>
            <person name="van Dyke T.E."/>
            <person name="Rao P.N."/>
            <person name="Pettenati M.J."/>
        </authorList>
    </citation>
    <scope>CHROMOSOMAL LOCATION</scope>
</reference>
<reference key="8">
    <citation type="journal article" date="2004" name="Biochemistry">
        <title>The alpha isoform of diacylglycerol kinase exhibits arachidonoyl specificity with alkylacylglycerol.</title>
        <authorList>
            <person name="Epand R.M."/>
            <person name="Kam A."/>
            <person name="Bridgelal N."/>
            <person name="Saiga A."/>
            <person name="Topham M.K."/>
        </authorList>
    </citation>
    <scope>FUNCTION</scope>
    <scope>CATALYTIC ACTIVITY</scope>
    <scope>SUBSTRATE SPECIFICITY</scope>
    <scope>PATHWAY</scope>
</reference>
<reference key="9">
    <citation type="journal article" date="2009" name="Science">
        <title>Lysine acetylation targets protein complexes and co-regulates major cellular functions.</title>
        <authorList>
            <person name="Choudhary C."/>
            <person name="Kumar C."/>
            <person name="Gnad F."/>
            <person name="Nielsen M.L."/>
            <person name="Rehman M."/>
            <person name="Walther T.C."/>
            <person name="Olsen J.V."/>
            <person name="Mann M."/>
        </authorList>
    </citation>
    <scope>ACETYLATION [LARGE SCALE ANALYSIS] AT LYS-484</scope>
    <scope>IDENTIFICATION BY MASS SPECTROMETRY [LARGE SCALE ANALYSIS]</scope>
</reference>
<reference key="10">
    <citation type="journal article" date="2011" name="BMC Syst. Biol.">
        <title>Initial characterization of the human central proteome.</title>
        <authorList>
            <person name="Burkard T.R."/>
            <person name="Planyavsky M."/>
            <person name="Kaupe I."/>
            <person name="Breitwieser F.P."/>
            <person name="Buerckstuemmer T."/>
            <person name="Bennett K.L."/>
            <person name="Superti-Furga G."/>
            <person name="Colinge J."/>
        </authorList>
    </citation>
    <scope>IDENTIFICATION BY MASS SPECTROMETRY [LARGE SCALE ANALYSIS]</scope>
</reference>
<reference key="11">
    <citation type="journal article" date="2012" name="Biochem. Biophys. Res. Commun.">
        <title>Biosynthesis of alkyl lysophosphatidic acid by diacylglycerol kinases.</title>
        <authorList>
            <person name="Gellett A.M."/>
            <person name="Kharel Y."/>
            <person name="Sunkara M."/>
            <person name="Morris A.J."/>
            <person name="Lynch K.R."/>
        </authorList>
    </citation>
    <scope>FUNCTION</scope>
    <scope>PATHWAY</scope>
</reference>
<reference key="12">
    <citation type="submission" date="2005-01" db="PDB data bank">
        <title>NMR structure of diacylglycerol kinase alpha, NESGC target HR532.</title>
        <authorList>
            <consortium name="Northeast structural genomics consortium (NESG)"/>
        </authorList>
    </citation>
    <scope>STRUCTURE BY NMR OF 1-118</scope>
</reference>
<reference evidence="17" key="13">
    <citation type="journal article" date="2019" name="Protein Sci.">
        <title>Crystal structure and calcium-induced conformational changes of diacylglycerol kinase alpha EF-hand domains.</title>
        <authorList>
            <person name="Takahashi D."/>
            <person name="Suzuki K."/>
            <person name="Sakamoto T."/>
            <person name="Iwamoto T."/>
            <person name="Murata T."/>
            <person name="Sakane F."/>
        </authorList>
    </citation>
    <scope>X-RAY CRYSTALLOGRAPHY (2.14 ANGSTROMS) OF 107-197 IN COMPLEX WITH CALCIUM</scope>
    <scope>SUBUNIT</scope>
    <scope>MUTAGENESIS OF GLU-134 AND GLU-179</scope>
</reference>
<dbReference type="EC" id="2.7.1.107" evidence="7 8"/>
<dbReference type="EC" id="2.7.1.93" evidence="2"/>
<dbReference type="EMBL" id="X62535">
    <property type="protein sequence ID" value="CAA44396.1"/>
    <property type="molecule type" value="mRNA"/>
</dbReference>
<dbReference type="EMBL" id="AF064767">
    <property type="protein sequence ID" value="AAC34802.1"/>
    <property type="molecule type" value="mRNA"/>
</dbReference>
<dbReference type="EMBL" id="AF064768">
    <property type="protein sequence ID" value="AAC34803.1"/>
    <property type="molecule type" value="mRNA"/>
</dbReference>
<dbReference type="EMBL" id="AF064769">
    <property type="protein sequence ID" value="AAC34804.1"/>
    <property type="molecule type" value="mRNA"/>
</dbReference>
<dbReference type="EMBL" id="AF064771">
    <property type="protein sequence ID" value="AAC34806.1"/>
    <property type="molecule type" value="mRNA"/>
</dbReference>
<dbReference type="EMBL" id="AY930112">
    <property type="protein sequence ID" value="AAY20994.1"/>
    <property type="molecule type" value="mRNA"/>
</dbReference>
<dbReference type="EMBL" id="AC025162">
    <property type="status" value="NOT_ANNOTATED_CDS"/>
    <property type="molecule type" value="Genomic_DNA"/>
</dbReference>
<dbReference type="EMBL" id="BC023523">
    <property type="protein sequence ID" value="AAH23523.1"/>
    <property type="molecule type" value="mRNA"/>
</dbReference>
<dbReference type="EMBL" id="BC031870">
    <property type="protein sequence ID" value="AAH31870.1"/>
    <property type="molecule type" value="mRNA"/>
</dbReference>
<dbReference type="CCDS" id="CCDS8896.1">
    <molecule id="P23743-1"/>
</dbReference>
<dbReference type="PIR" id="S12969">
    <property type="entry name" value="S12969"/>
</dbReference>
<dbReference type="RefSeq" id="NP_001336.2">
    <molecule id="P23743-1"/>
    <property type="nucleotide sequence ID" value="NM_001345.4"/>
</dbReference>
<dbReference type="RefSeq" id="NP_001337962.1">
    <molecule id="P23743-1"/>
    <property type="nucleotide sequence ID" value="NM_001351033.2"/>
</dbReference>
<dbReference type="RefSeq" id="NP_001337963.1">
    <molecule id="P23743-1"/>
    <property type="nucleotide sequence ID" value="NM_001351034.2"/>
</dbReference>
<dbReference type="RefSeq" id="NP_001400525.1">
    <molecule id="P23743-1"/>
    <property type="nucleotide sequence ID" value="NM_001413596.1"/>
</dbReference>
<dbReference type="RefSeq" id="NP_001400526.1">
    <molecule id="P23743-1"/>
    <property type="nucleotide sequence ID" value="NM_001413597.1"/>
</dbReference>
<dbReference type="RefSeq" id="NP_001400527.1">
    <molecule id="P23743-1"/>
    <property type="nucleotide sequence ID" value="NM_001413598.1"/>
</dbReference>
<dbReference type="RefSeq" id="NP_958852.1">
    <molecule id="P23743-1"/>
    <property type="nucleotide sequence ID" value="NM_201444.3"/>
</dbReference>
<dbReference type="RefSeq" id="NP_958853.1">
    <molecule id="P23743-1"/>
    <property type="nucleotide sequence ID" value="NM_201445.2"/>
</dbReference>
<dbReference type="RefSeq" id="NP_963848.1">
    <molecule id="P23743-1"/>
    <property type="nucleotide sequence ID" value="NM_201554.2"/>
</dbReference>
<dbReference type="RefSeq" id="XP_011536293.1">
    <property type="nucleotide sequence ID" value="XM_011537991.2"/>
</dbReference>
<dbReference type="RefSeq" id="XP_011536295.1">
    <property type="nucleotide sequence ID" value="XM_011537993.2"/>
</dbReference>
<dbReference type="RefSeq" id="XP_047284390.1">
    <molecule id="P23743-1"/>
    <property type="nucleotide sequence ID" value="XM_047428434.1"/>
</dbReference>
<dbReference type="RefSeq" id="XP_047284391.1">
    <molecule id="P23743-1"/>
    <property type="nucleotide sequence ID" value="XM_047428435.1"/>
</dbReference>
<dbReference type="RefSeq" id="XP_054227261.1">
    <molecule id="P23743-1"/>
    <property type="nucleotide sequence ID" value="XM_054371286.1"/>
</dbReference>
<dbReference type="PDB" id="1TUZ">
    <property type="method" value="NMR"/>
    <property type="chains" value="A=1-116"/>
</dbReference>
<dbReference type="PDB" id="6IIE">
    <property type="method" value="X-ray"/>
    <property type="resolution" value="2.14 A"/>
    <property type="chains" value="A=107-197"/>
</dbReference>
<dbReference type="PDBsum" id="1TUZ"/>
<dbReference type="PDBsum" id="6IIE"/>
<dbReference type="BMRB" id="P23743"/>
<dbReference type="SASBDB" id="P23743"/>
<dbReference type="SMR" id="P23743"/>
<dbReference type="BioGRID" id="107976">
    <property type="interactions" value="34"/>
</dbReference>
<dbReference type="FunCoup" id="P23743">
    <property type="interactions" value="734"/>
</dbReference>
<dbReference type="IntAct" id="P23743">
    <property type="interactions" value="7"/>
</dbReference>
<dbReference type="MINT" id="P23743"/>
<dbReference type="STRING" id="9606.ENSP00000377703"/>
<dbReference type="BindingDB" id="P23743"/>
<dbReference type="ChEMBL" id="CHEMBL4105787"/>
<dbReference type="DrugBank" id="DB14001">
    <property type="generic name" value="alpha-Tocopherol succinate"/>
</dbReference>
<dbReference type="DrugBank" id="DB00163">
    <property type="generic name" value="Vitamin E"/>
</dbReference>
<dbReference type="GuidetoPHARMACOLOGY" id="3256"/>
<dbReference type="SwissLipids" id="SLP:000000555"/>
<dbReference type="SwissLipids" id="SLP:000000739"/>
<dbReference type="GlyGen" id="P23743">
    <property type="glycosylation" value="1 site, 1 O-linked glycan (1 site)"/>
</dbReference>
<dbReference type="iPTMnet" id="P23743"/>
<dbReference type="MetOSite" id="P23743"/>
<dbReference type="PhosphoSitePlus" id="P23743"/>
<dbReference type="BioMuta" id="DGKA"/>
<dbReference type="DMDM" id="281185505"/>
<dbReference type="jPOST" id="P23743"/>
<dbReference type="MassIVE" id="P23743"/>
<dbReference type="PaxDb" id="9606-ENSP00000328405"/>
<dbReference type="PeptideAtlas" id="P23743"/>
<dbReference type="ProteomicsDB" id="54146">
    <molecule id="P23743-1"/>
</dbReference>
<dbReference type="ProteomicsDB" id="54147">
    <molecule id="P23743-2"/>
</dbReference>
<dbReference type="Pumba" id="P23743"/>
<dbReference type="Antibodypedia" id="27785">
    <property type="antibodies" value="466 antibodies from 32 providers"/>
</dbReference>
<dbReference type="DNASU" id="1606"/>
<dbReference type="Ensembl" id="ENST00000331886.10">
    <molecule id="P23743-1"/>
    <property type="protein sequence ID" value="ENSP00000328405.5"/>
    <property type="gene ID" value="ENSG00000065357.20"/>
</dbReference>
<dbReference type="Ensembl" id="ENST00000394147.5">
    <molecule id="P23743-1"/>
    <property type="protein sequence ID" value="ENSP00000377703.1"/>
    <property type="gene ID" value="ENSG00000065357.20"/>
</dbReference>
<dbReference type="Ensembl" id="ENST00000402956.7">
    <molecule id="P23743-3"/>
    <property type="protein sequence ID" value="ENSP00000385792.3"/>
    <property type="gene ID" value="ENSG00000065357.20"/>
</dbReference>
<dbReference type="Ensembl" id="ENST00000548549.5">
    <molecule id="P23743-2"/>
    <property type="protein sequence ID" value="ENSP00000448565.1"/>
    <property type="gene ID" value="ENSG00000065357.20"/>
</dbReference>
<dbReference type="Ensembl" id="ENST00000551156.5">
    <molecule id="P23743-1"/>
    <property type="protein sequence ID" value="ENSP00000450359.1"/>
    <property type="gene ID" value="ENSG00000065357.20"/>
</dbReference>
<dbReference type="Ensembl" id="ENST00000553084.5">
    <molecule id="P23743-2"/>
    <property type="protein sequence ID" value="ENSP00000446605.1"/>
    <property type="gene ID" value="ENSG00000065357.20"/>
</dbReference>
<dbReference type="GeneID" id="1606"/>
<dbReference type="KEGG" id="hsa:1606"/>
<dbReference type="MANE-Select" id="ENST00000331886.10">
    <property type="protein sequence ID" value="ENSP00000328405.5"/>
    <property type="RefSeq nucleotide sequence ID" value="NM_001345.5"/>
    <property type="RefSeq protein sequence ID" value="NP_001336.2"/>
</dbReference>
<dbReference type="UCSC" id="uc001sij.4">
    <molecule id="P23743-1"/>
    <property type="organism name" value="human"/>
</dbReference>
<dbReference type="AGR" id="HGNC:2849"/>
<dbReference type="CTD" id="1606"/>
<dbReference type="DisGeNET" id="1606"/>
<dbReference type="GeneCards" id="DGKA"/>
<dbReference type="HGNC" id="HGNC:2849">
    <property type="gene designation" value="DGKA"/>
</dbReference>
<dbReference type="HPA" id="ENSG00000065357">
    <property type="expression patterns" value="Tissue enhanced (esophagus, lymphoid tissue)"/>
</dbReference>
<dbReference type="MIM" id="125855">
    <property type="type" value="gene"/>
</dbReference>
<dbReference type="neXtProt" id="NX_P23743"/>
<dbReference type="OpenTargets" id="ENSG00000065357"/>
<dbReference type="PharmGKB" id="PA27310"/>
<dbReference type="VEuPathDB" id="HostDB:ENSG00000065357"/>
<dbReference type="eggNOG" id="KOG1169">
    <property type="taxonomic scope" value="Eukaryota"/>
</dbReference>
<dbReference type="GeneTree" id="ENSGT00940000157144"/>
<dbReference type="HOGENOM" id="CLU_059202_0_0_1"/>
<dbReference type="InParanoid" id="P23743"/>
<dbReference type="OMA" id="KAMPCEV"/>
<dbReference type="OrthoDB" id="242257at2759"/>
<dbReference type="PAN-GO" id="P23743">
    <property type="GO annotations" value="5 GO annotations based on evolutionary models"/>
</dbReference>
<dbReference type="PhylomeDB" id="P23743"/>
<dbReference type="TreeFam" id="TF313104"/>
<dbReference type="BRENDA" id="2.7.1.107">
    <property type="organism ID" value="2681"/>
</dbReference>
<dbReference type="PathwayCommons" id="P23743"/>
<dbReference type="Reactome" id="R-HSA-114508">
    <property type="pathway name" value="Effects of PIP2 hydrolysis"/>
</dbReference>
<dbReference type="SABIO-RK" id="P23743"/>
<dbReference type="SignaLink" id="P23743"/>
<dbReference type="SIGNOR" id="P23743"/>
<dbReference type="UniPathway" id="UPA00230"/>
<dbReference type="BioGRID-ORCS" id="1606">
    <property type="hits" value="26 hits in 1162 CRISPR screens"/>
</dbReference>
<dbReference type="ChiTaRS" id="DGKA">
    <property type="organism name" value="human"/>
</dbReference>
<dbReference type="EvolutionaryTrace" id="P23743"/>
<dbReference type="GeneWiki" id="DGKA"/>
<dbReference type="GenomeRNAi" id="1606"/>
<dbReference type="Pharos" id="P23743">
    <property type="development level" value="Tbio"/>
</dbReference>
<dbReference type="PRO" id="PR:P23743"/>
<dbReference type="Proteomes" id="UP000005640">
    <property type="component" value="Chromosome 12"/>
</dbReference>
<dbReference type="RNAct" id="P23743">
    <property type="molecule type" value="protein"/>
</dbReference>
<dbReference type="Bgee" id="ENSG00000065357">
    <property type="expression patterns" value="Expressed in lower esophagus mucosa and 180 other cell types or tissues"/>
</dbReference>
<dbReference type="ExpressionAtlas" id="P23743">
    <property type="expression patterns" value="baseline and differential"/>
</dbReference>
<dbReference type="GO" id="GO:0005829">
    <property type="term" value="C:cytosol"/>
    <property type="evidence" value="ECO:0000314"/>
    <property type="project" value="UniProtKB"/>
</dbReference>
<dbReference type="GO" id="GO:0016020">
    <property type="term" value="C:membrane"/>
    <property type="evidence" value="ECO:0007005"/>
    <property type="project" value="UniProtKB"/>
</dbReference>
<dbReference type="GO" id="GO:0005886">
    <property type="term" value="C:plasma membrane"/>
    <property type="evidence" value="ECO:0000318"/>
    <property type="project" value="GO_Central"/>
</dbReference>
<dbReference type="GO" id="GO:0047649">
    <property type="term" value="F:alkylglycerol kinase activity"/>
    <property type="evidence" value="ECO:0007669"/>
    <property type="project" value="RHEA"/>
</dbReference>
<dbReference type="GO" id="GO:0005524">
    <property type="term" value="F:ATP binding"/>
    <property type="evidence" value="ECO:0007669"/>
    <property type="project" value="UniProtKB-KW"/>
</dbReference>
<dbReference type="GO" id="GO:0004143">
    <property type="term" value="F:ATP-dependent diacylglycerol kinase activity"/>
    <property type="evidence" value="ECO:0000314"/>
    <property type="project" value="UniProtKB"/>
</dbReference>
<dbReference type="GO" id="GO:0005509">
    <property type="term" value="F:calcium ion binding"/>
    <property type="evidence" value="ECO:0007669"/>
    <property type="project" value="InterPro"/>
</dbReference>
<dbReference type="GO" id="GO:0016301">
    <property type="term" value="F:kinase activity"/>
    <property type="evidence" value="ECO:0000314"/>
    <property type="project" value="BHF-UCL"/>
</dbReference>
<dbReference type="GO" id="GO:0008289">
    <property type="term" value="F:lipid binding"/>
    <property type="evidence" value="ECO:0000314"/>
    <property type="project" value="BHF-UCL"/>
</dbReference>
<dbReference type="GO" id="GO:0005543">
    <property type="term" value="F:phospholipid binding"/>
    <property type="evidence" value="ECO:0007669"/>
    <property type="project" value="Ensembl"/>
</dbReference>
<dbReference type="GO" id="GO:0008270">
    <property type="term" value="F:zinc ion binding"/>
    <property type="evidence" value="ECO:0007669"/>
    <property type="project" value="UniProtKB-KW"/>
</dbReference>
<dbReference type="GO" id="GO:0046339">
    <property type="term" value="P:diacylglycerol metabolic process"/>
    <property type="evidence" value="ECO:0000314"/>
    <property type="project" value="UniProtKB"/>
</dbReference>
<dbReference type="GO" id="GO:0046486">
    <property type="term" value="P:glycerolipid metabolic process"/>
    <property type="evidence" value="ECO:0000314"/>
    <property type="project" value="BHF-UCL"/>
</dbReference>
<dbReference type="GO" id="GO:0035556">
    <property type="term" value="P:intracellular signal transduction"/>
    <property type="evidence" value="ECO:0000318"/>
    <property type="project" value="GO_Central"/>
</dbReference>
<dbReference type="GO" id="GO:0046834">
    <property type="term" value="P:lipid phosphorylation"/>
    <property type="evidence" value="ECO:0000314"/>
    <property type="project" value="UniProtKB"/>
</dbReference>
<dbReference type="GO" id="GO:0006654">
    <property type="term" value="P:phosphatidic acid biosynthetic process"/>
    <property type="evidence" value="ECO:0000314"/>
    <property type="project" value="UniProtKB"/>
</dbReference>
<dbReference type="GO" id="GO:0007200">
    <property type="term" value="P:phospholipase C-activating G protein-coupled receptor signaling pathway"/>
    <property type="evidence" value="ECO:0007669"/>
    <property type="project" value="InterPro"/>
</dbReference>
<dbReference type="GO" id="GO:0030168">
    <property type="term" value="P:platelet activation"/>
    <property type="evidence" value="ECO:0000304"/>
    <property type="project" value="Reactome"/>
</dbReference>
<dbReference type="CDD" id="cd20799">
    <property type="entry name" value="C1_DGK_typeI_rpt1"/>
    <property type="match status" value="1"/>
</dbReference>
<dbReference type="CDD" id="cd20890">
    <property type="entry name" value="C1_DGKalpha_rpt2"/>
    <property type="match status" value="1"/>
</dbReference>
<dbReference type="CDD" id="cd00051">
    <property type="entry name" value="EFh"/>
    <property type="match status" value="1"/>
</dbReference>
<dbReference type="FunFam" id="1.10.238.10:FF:000017">
    <property type="entry name" value="Diacylglycerol kinase"/>
    <property type="match status" value="1"/>
</dbReference>
<dbReference type="FunFam" id="1.10.238.110:FF:000004">
    <property type="entry name" value="Diacylglycerol kinase"/>
    <property type="match status" value="1"/>
</dbReference>
<dbReference type="FunFam" id="2.60.200.40:FF:000003">
    <property type="entry name" value="Diacylglycerol kinase"/>
    <property type="match status" value="1"/>
</dbReference>
<dbReference type="FunFam" id="3.30.60.20:FF:000039">
    <property type="entry name" value="Diacylglycerol kinase"/>
    <property type="match status" value="1"/>
</dbReference>
<dbReference type="FunFam" id="3.30.60.20:FF:000047">
    <property type="entry name" value="Diacylglycerol kinase"/>
    <property type="match status" value="1"/>
</dbReference>
<dbReference type="FunFam" id="3.40.50.10330:FF:000003">
    <property type="entry name" value="Diacylglycerol kinase"/>
    <property type="match status" value="1"/>
</dbReference>
<dbReference type="Gene3D" id="2.60.200.40">
    <property type="match status" value="1"/>
</dbReference>
<dbReference type="Gene3D" id="3.30.60.20">
    <property type="match status" value="2"/>
</dbReference>
<dbReference type="Gene3D" id="1.10.238.110">
    <property type="entry name" value="Diacylglycerol kinase alpha"/>
    <property type="match status" value="1"/>
</dbReference>
<dbReference type="Gene3D" id="1.10.238.10">
    <property type="entry name" value="EF-hand"/>
    <property type="match status" value="1"/>
</dbReference>
<dbReference type="Gene3D" id="3.40.50.10330">
    <property type="entry name" value="Probable inorganic polyphosphate/atp-NAD kinase, domain 1"/>
    <property type="match status" value="1"/>
</dbReference>
<dbReference type="InterPro" id="IPR017438">
    <property type="entry name" value="ATP-NAD_kinase_N"/>
</dbReference>
<dbReference type="InterPro" id="IPR046349">
    <property type="entry name" value="C1-like_sf"/>
</dbReference>
<dbReference type="InterPro" id="IPR047469">
    <property type="entry name" value="C1_DGKalpha_rpt2"/>
</dbReference>
<dbReference type="InterPro" id="IPR029477">
    <property type="entry name" value="DAG_kinase_typeI_N"/>
</dbReference>
<dbReference type="InterPro" id="IPR037607">
    <property type="entry name" value="DGK"/>
</dbReference>
<dbReference type="InterPro" id="IPR038199">
    <property type="entry name" value="DGK_typeI_N_sf"/>
</dbReference>
<dbReference type="InterPro" id="IPR000756">
    <property type="entry name" value="Diacylglycerol_kin_accessory"/>
</dbReference>
<dbReference type="InterPro" id="IPR001206">
    <property type="entry name" value="Diacylglycerol_kinase_cat_dom"/>
</dbReference>
<dbReference type="InterPro" id="IPR011992">
    <property type="entry name" value="EF-hand-dom_pair"/>
</dbReference>
<dbReference type="InterPro" id="IPR018247">
    <property type="entry name" value="EF_Hand_1_Ca_BS"/>
</dbReference>
<dbReference type="InterPro" id="IPR002048">
    <property type="entry name" value="EF_hand_dom"/>
</dbReference>
<dbReference type="InterPro" id="IPR016064">
    <property type="entry name" value="NAD/diacylglycerol_kinase_sf"/>
</dbReference>
<dbReference type="InterPro" id="IPR002219">
    <property type="entry name" value="PE/DAG-bd"/>
</dbReference>
<dbReference type="PANTHER" id="PTHR11255">
    <property type="entry name" value="DIACYLGLYCEROL KINASE"/>
    <property type="match status" value="1"/>
</dbReference>
<dbReference type="PANTHER" id="PTHR11255:SF38">
    <property type="entry name" value="DIACYLGLYCEROL KINASE ALPHA"/>
    <property type="match status" value="1"/>
</dbReference>
<dbReference type="Pfam" id="PF00130">
    <property type="entry name" value="C1_1"/>
    <property type="match status" value="2"/>
</dbReference>
<dbReference type="Pfam" id="PF14513">
    <property type="entry name" value="DAG_kinase_N"/>
    <property type="match status" value="1"/>
</dbReference>
<dbReference type="Pfam" id="PF00609">
    <property type="entry name" value="DAGK_acc"/>
    <property type="match status" value="1"/>
</dbReference>
<dbReference type="Pfam" id="PF00781">
    <property type="entry name" value="DAGK_cat"/>
    <property type="match status" value="1"/>
</dbReference>
<dbReference type="SMART" id="SM00109">
    <property type="entry name" value="C1"/>
    <property type="match status" value="2"/>
</dbReference>
<dbReference type="SMART" id="SM00045">
    <property type="entry name" value="DAGKa"/>
    <property type="match status" value="1"/>
</dbReference>
<dbReference type="SMART" id="SM00046">
    <property type="entry name" value="DAGKc"/>
    <property type="match status" value="1"/>
</dbReference>
<dbReference type="SMART" id="SM00054">
    <property type="entry name" value="EFh"/>
    <property type="match status" value="2"/>
</dbReference>
<dbReference type="SUPFAM" id="SSF57889">
    <property type="entry name" value="Cysteine-rich domain"/>
    <property type="match status" value="2"/>
</dbReference>
<dbReference type="SUPFAM" id="SSF47473">
    <property type="entry name" value="EF-hand"/>
    <property type="match status" value="2"/>
</dbReference>
<dbReference type="SUPFAM" id="SSF111331">
    <property type="entry name" value="NAD kinase/diacylglycerol kinase-like"/>
    <property type="match status" value="1"/>
</dbReference>
<dbReference type="PROSITE" id="PS50146">
    <property type="entry name" value="DAGK"/>
    <property type="match status" value="1"/>
</dbReference>
<dbReference type="PROSITE" id="PS00018">
    <property type="entry name" value="EF_HAND_1"/>
    <property type="match status" value="2"/>
</dbReference>
<dbReference type="PROSITE" id="PS50222">
    <property type="entry name" value="EF_HAND_2"/>
    <property type="match status" value="2"/>
</dbReference>
<dbReference type="PROSITE" id="PS00479">
    <property type="entry name" value="ZF_DAG_PE_1"/>
    <property type="match status" value="2"/>
</dbReference>
<dbReference type="PROSITE" id="PS50081">
    <property type="entry name" value="ZF_DAG_PE_2"/>
    <property type="match status" value="2"/>
</dbReference>
<protein>
    <recommendedName>
        <fullName>Diacylglycerol kinase alpha</fullName>
        <shortName>DAG kinase alpha</shortName>
        <ecNumber evidence="7 8">2.7.1.107</ecNumber>
        <ecNumber evidence="2">2.7.1.93</ecNumber>
    </recommendedName>
    <alternativeName>
        <fullName>80 kDa diacylglycerol kinase</fullName>
    </alternativeName>
    <alternativeName>
        <fullName>Diglyceride kinase alpha</fullName>
        <shortName>DGK-alpha</shortName>
    </alternativeName>
</protein>
<sequence length="735" mass="82630">MAKERGLISPSDFAQLQKYMEYSTKKVSDVLKLFEDGEMAKYVQGDAIGYEGFQQFLKIYLEVDNVPRHLSLALFQSFETGHCLNETNVTKDVVCLNDVSCYFSLLEGGRPEDKLEFTFKLYDTDRNGILDSSEVDKIILQMMRVAEYLDWDVSELRPILQEMMKEIDYDGSGSVSQAEWVRAGATTVPLLVLLGLEMTLKDDGQHMWRPKRFPRPVYCNLCESSIGLGKQGLSCNLCKYTVHDQCAMKALPCEVSTYAKSRKDIGVQSHVWVRGGCESGRCDRCQKKIRIYHSLTGLHCVWCHLEIHDDCLQAVGHECDCGLLRDHILPPSSIYPSVLASGPDRKNSKTSQKTMDDLNLSTSEALRIDPVPNTHPLLVFVNPKSGGKQGQRVLWKFQYILNPRQVFNLLKDGPEIGLRLFKDVPDSRILVCGGDGTVGWILETIDKANLPVLPPVAVLPLGTGNDLARCLRWGGGYEGQNLAKILKDLEMSKVVHMDRWSVEVIPQQTEEKSDPVPFQIINNYFSIGVDASIAHRFHIMREKYPEKFNSRMKNKLWYFEFATSESIFSTCKKLEESLTVEICGKPLDLSNLSLEGIAVLNIPSMHGGSNLWGDTRRPHGDIYGINQALGATAKVITDPDILKTCVPDLSDKRLEVVGLEGAIEMGQIYTKLKNAGRRLAKCSEITFHTTKTLPMQIDGEPWMQTPCTIKITHKNQMPMLMGPPPRSTNFFGFLS</sequence>
<comment type="function">
    <text evidence="7 8 9 13">Diacylglycerol kinase that converts diacylglycerol/DAG into phosphatidic acid/phosphatidate/PA and regulates the respective levels of these two bioactive lipids (PubMed:15544348, PubMed:2175712). Thereby, acts as a central switch between the signaling pathways activated by these second messengers with different cellular targets and opposite effects in numerous biological processes (PubMed:15544348, PubMed:2175712). Also plays an important role in the biosynthesis of complex lipids (Probable). Can also phosphorylate 1-alkyl-2-acylglycerol in vitro as efficiently as diacylglycerol provided it contains an arachidonoyl group (PubMed:15544348). Also involved in the production of alkyl-lysophosphatidic acid, another bioactive lipid, through the phosphorylation of 1-alkyl-2-acetyl glycerol (PubMed:22627129).</text>
</comment>
<comment type="catalytic activity">
    <reaction evidence="7 8">
        <text>a 1,2-diacyl-sn-glycerol + ATP = a 1,2-diacyl-sn-glycero-3-phosphate + ADP + H(+)</text>
        <dbReference type="Rhea" id="RHEA:10272"/>
        <dbReference type="ChEBI" id="CHEBI:15378"/>
        <dbReference type="ChEBI" id="CHEBI:17815"/>
        <dbReference type="ChEBI" id="CHEBI:30616"/>
        <dbReference type="ChEBI" id="CHEBI:58608"/>
        <dbReference type="ChEBI" id="CHEBI:456216"/>
        <dbReference type="EC" id="2.7.1.107"/>
    </reaction>
    <physiologicalReaction direction="left-to-right" evidence="15">
        <dbReference type="Rhea" id="RHEA:10273"/>
    </physiologicalReaction>
</comment>
<comment type="catalytic activity">
    <reaction evidence="2">
        <text>a 1-O-alkyl-sn-glycerol + ATP = a 1-O-alkyl-sn-glycero-3-phosphate + ADP + H(+)</text>
        <dbReference type="Rhea" id="RHEA:16937"/>
        <dbReference type="ChEBI" id="CHEBI:15378"/>
        <dbReference type="ChEBI" id="CHEBI:15850"/>
        <dbReference type="ChEBI" id="CHEBI:30616"/>
        <dbReference type="ChEBI" id="CHEBI:58014"/>
        <dbReference type="ChEBI" id="CHEBI:456216"/>
        <dbReference type="EC" id="2.7.1.93"/>
    </reaction>
    <physiologicalReaction direction="left-to-right" evidence="2">
        <dbReference type="Rhea" id="RHEA:16938"/>
    </physiologicalReaction>
</comment>
<comment type="catalytic activity">
    <reaction evidence="7 8">
        <text>1-O-alkyl-2-acyl-sn-glycerol + ATP = 1-O-alkyl-2-acyl-sn-glycero-3-phosphate + ADP + H(+)</text>
        <dbReference type="Rhea" id="RHEA:44072"/>
        <dbReference type="ChEBI" id="CHEBI:15378"/>
        <dbReference type="ChEBI" id="CHEBI:30616"/>
        <dbReference type="ChEBI" id="CHEBI:52595"/>
        <dbReference type="ChEBI" id="CHEBI:73332"/>
        <dbReference type="ChEBI" id="CHEBI:456216"/>
    </reaction>
    <physiologicalReaction direction="left-to-right" evidence="15">
        <dbReference type="Rhea" id="RHEA:44073"/>
    </physiologicalReaction>
</comment>
<comment type="catalytic activity">
    <reaction evidence="8">
        <text>1,2-dihexadecanoyl-sn-glycerol + ATP = 1,2-dihexadecanoyl-sn-glycero-3-phosphate + ADP + H(+)</text>
        <dbReference type="Rhea" id="RHEA:63324"/>
        <dbReference type="ChEBI" id="CHEBI:15378"/>
        <dbReference type="ChEBI" id="CHEBI:30616"/>
        <dbReference type="ChEBI" id="CHEBI:72859"/>
        <dbReference type="ChEBI" id="CHEBI:82929"/>
        <dbReference type="ChEBI" id="CHEBI:456216"/>
    </reaction>
    <physiologicalReaction direction="left-to-right" evidence="15">
        <dbReference type="Rhea" id="RHEA:63325"/>
    </physiologicalReaction>
</comment>
<comment type="catalytic activity">
    <reaction evidence="8">
        <text>1-hexadecanoyl-2-(9Z-octadecenoyl)-sn-glycerol + ATP = 1-hexadecanoyl-2-(9Z-octadecenoyl)-sn-glycero-3-phosphate + ADP + H(+)</text>
        <dbReference type="Rhea" id="RHEA:43416"/>
        <dbReference type="ChEBI" id="CHEBI:15378"/>
        <dbReference type="ChEBI" id="CHEBI:30616"/>
        <dbReference type="ChEBI" id="CHEBI:64839"/>
        <dbReference type="ChEBI" id="CHEBI:75466"/>
        <dbReference type="ChEBI" id="CHEBI:456216"/>
    </reaction>
    <physiologicalReaction direction="left-to-right" evidence="15">
        <dbReference type="Rhea" id="RHEA:43417"/>
    </physiologicalReaction>
</comment>
<comment type="catalytic activity">
    <reaction evidence="8">
        <text>2-(9Z-octadecenoyl)-glycerol + ATP = 2-(9Z-octadecenoyl)-sn-glycero-3-phosphate + ADP + H(+)</text>
        <dbReference type="Rhea" id="RHEA:63328"/>
        <dbReference type="ChEBI" id="CHEBI:15378"/>
        <dbReference type="ChEBI" id="CHEBI:30616"/>
        <dbReference type="ChEBI" id="CHEBI:73990"/>
        <dbReference type="ChEBI" id="CHEBI:77593"/>
        <dbReference type="ChEBI" id="CHEBI:456216"/>
    </reaction>
    <physiologicalReaction direction="left-to-right" evidence="15">
        <dbReference type="Rhea" id="RHEA:63329"/>
    </physiologicalReaction>
</comment>
<comment type="catalytic activity">
    <reaction evidence="7 8">
        <text>1,2-di-(9Z-octadecenoyl)-sn-glycerol + ATP = 1,2-di-(9Z-octadecenoyl)-sn-glycero-3-phosphate + ADP + H(+)</text>
        <dbReference type="Rhea" id="RHEA:40327"/>
        <dbReference type="ChEBI" id="CHEBI:15378"/>
        <dbReference type="ChEBI" id="CHEBI:30616"/>
        <dbReference type="ChEBI" id="CHEBI:52333"/>
        <dbReference type="ChEBI" id="CHEBI:74546"/>
        <dbReference type="ChEBI" id="CHEBI:456216"/>
    </reaction>
    <physiologicalReaction direction="left-to-right" evidence="15">
        <dbReference type="Rhea" id="RHEA:40328"/>
    </physiologicalReaction>
</comment>
<comment type="catalytic activity">
    <reaction evidence="7 8">
        <text>1-octadecanoyl-2-(5Z,8Z,11Z,14Z-eicosatetraenoyl)-sn-glycerol + ATP = 1-octadecanoyl-2-(5Z,8Z,11Z,14Z-eicosatetraenoyl)-sn-glycero-3-phosphate + ADP + H(+)</text>
        <dbReference type="Rhea" id="RHEA:40323"/>
        <dbReference type="ChEBI" id="CHEBI:15378"/>
        <dbReference type="ChEBI" id="CHEBI:30616"/>
        <dbReference type="ChEBI" id="CHEBI:75728"/>
        <dbReference type="ChEBI" id="CHEBI:77091"/>
        <dbReference type="ChEBI" id="CHEBI:456216"/>
    </reaction>
    <physiologicalReaction direction="left-to-right" evidence="15">
        <dbReference type="Rhea" id="RHEA:40324"/>
    </physiologicalReaction>
</comment>
<comment type="catalytic activity">
    <reaction evidence="1">
        <text>1,2-didecanoyl-sn-glycerol + ATP = 1,2-didecanoyl-sn-glycero-3-phosphate + ADP + H(+)</text>
        <dbReference type="Rhea" id="RHEA:43428"/>
        <dbReference type="ChEBI" id="CHEBI:15378"/>
        <dbReference type="ChEBI" id="CHEBI:18155"/>
        <dbReference type="ChEBI" id="CHEBI:30616"/>
        <dbReference type="ChEBI" id="CHEBI:78227"/>
        <dbReference type="ChEBI" id="CHEBI:456216"/>
    </reaction>
    <physiologicalReaction direction="left-to-right" evidence="1">
        <dbReference type="Rhea" id="RHEA:43429"/>
    </physiologicalReaction>
</comment>
<comment type="catalytic activity">
    <reaction evidence="2">
        <text>1-O-hexadecyl-2-acetyl-sn-glycerol + ATP = 1-O-hexadecyl-2-acetyl-sn-glycero-3-phosphate + ADP + H(+)</text>
        <dbReference type="Rhea" id="RHEA:41676"/>
        <dbReference type="ChEBI" id="CHEBI:15378"/>
        <dbReference type="ChEBI" id="CHEBI:30616"/>
        <dbReference type="ChEBI" id="CHEBI:75936"/>
        <dbReference type="ChEBI" id="CHEBI:78385"/>
        <dbReference type="ChEBI" id="CHEBI:456216"/>
    </reaction>
    <physiologicalReaction direction="left-to-right" evidence="2">
        <dbReference type="Rhea" id="RHEA:41677"/>
    </physiologicalReaction>
</comment>
<comment type="catalytic activity">
    <reaction evidence="7">
        <text>1-O-hexadecyl-2-(5Z,8Z,11Z,14Z-eicosatetraenoyl)-sn-glycerol + ATP = 1-O-hexadecyl-2-(5Z,8Z,11Z,14Z-eicosatetraenoyl)-sn-glycero-3-phosphate + ADP + H(+)</text>
        <dbReference type="Rhea" id="RHEA:40403"/>
        <dbReference type="ChEBI" id="CHEBI:15378"/>
        <dbReference type="ChEBI" id="CHEBI:30616"/>
        <dbReference type="ChEBI" id="CHEBI:77184"/>
        <dbReference type="ChEBI" id="CHEBI:77186"/>
        <dbReference type="ChEBI" id="CHEBI:456216"/>
    </reaction>
    <physiologicalReaction direction="left-to-right" evidence="14">
        <dbReference type="Rhea" id="RHEA:40404"/>
    </physiologicalReaction>
</comment>
<comment type="catalytic activity">
    <reaction evidence="7 8">
        <text>1-O-hexadecyl-2-(9Z-octadecenoyl)-sn-glycerol + ATP = 1-O-hexadecyl-2-(9Z-octadecenoyl)-sn-glycero-3-phosphate + ADP + H(+)</text>
        <dbReference type="Rhea" id="RHEA:40407"/>
        <dbReference type="ChEBI" id="CHEBI:15378"/>
        <dbReference type="ChEBI" id="CHEBI:30616"/>
        <dbReference type="ChEBI" id="CHEBI:77185"/>
        <dbReference type="ChEBI" id="CHEBI:77187"/>
        <dbReference type="ChEBI" id="CHEBI:456216"/>
    </reaction>
    <physiologicalReaction direction="left-to-right" evidence="15">
        <dbReference type="Rhea" id="RHEA:40408"/>
    </physiologicalReaction>
</comment>
<comment type="catalytic activity">
    <reaction evidence="2">
        <text>1-O-hexadecyl-sn-glycerol + ATP = 1-O-hexadecyl-sn-glycero-3-phosphate + ADP + H(+)</text>
        <dbReference type="Rhea" id="RHEA:41672"/>
        <dbReference type="ChEBI" id="CHEBI:15378"/>
        <dbReference type="ChEBI" id="CHEBI:30616"/>
        <dbReference type="ChEBI" id="CHEBI:34115"/>
        <dbReference type="ChEBI" id="CHEBI:77580"/>
        <dbReference type="ChEBI" id="CHEBI:456216"/>
    </reaction>
    <physiologicalReaction direction="left-to-right" evidence="2">
        <dbReference type="Rhea" id="RHEA:41673"/>
    </physiologicalReaction>
</comment>
<comment type="activity regulation">
    <text evidence="8">Stimulated by calcium and phosphatidylserine.</text>
</comment>
<comment type="pathway">
    <text evidence="14 15 16">Lipid metabolism; glycerolipid metabolism.</text>
</comment>
<comment type="subunit">
    <text evidence="8 10">Monomer.</text>
</comment>
<comment type="subcellular location">
    <subcellularLocation>
        <location evidence="8">Cytoplasm</location>
        <location evidence="8">Cytosol</location>
    </subcellularLocation>
</comment>
<comment type="alternative products">
    <event type="alternative splicing"/>
    <isoform>
        <id>P23743-1</id>
        <name>1</name>
        <sequence type="displayed"/>
    </isoform>
    <isoform>
        <id>P23743-2</id>
        <name>2</name>
        <sequence type="described" ref="VSP_032212 VSP_032213"/>
    </isoform>
    <isoform>
        <id>P23743-3</id>
        <name>3</name>
        <sequence type="described" ref="VSP_047702 VSP_047703"/>
    </isoform>
</comment>
<comment type="tissue specificity">
    <text evidence="8">Expressed in lymphocytes.</text>
</comment>
<comment type="miscellaneous">
    <molecule>Isoform 2</molecule>
    <text evidence="13">May be produced at very low levels due to a premature stop codon in the mRNA, leading to nonsense-mediated mRNA decay.</text>
</comment>
<comment type="similarity">
    <text evidence="13">Belongs to the eukaryotic diacylglycerol kinase family.</text>
</comment>
<keyword id="KW-0002">3D-structure</keyword>
<keyword id="KW-0007">Acetylation</keyword>
<keyword id="KW-0025">Alternative splicing</keyword>
<keyword id="KW-0067">ATP-binding</keyword>
<keyword id="KW-0106">Calcium</keyword>
<keyword id="KW-0963">Cytoplasm</keyword>
<keyword id="KW-0418">Kinase</keyword>
<keyword id="KW-0443">Lipid metabolism</keyword>
<keyword id="KW-0479">Metal-binding</keyword>
<keyword id="KW-0547">Nucleotide-binding</keyword>
<keyword id="KW-1267">Proteomics identification</keyword>
<keyword id="KW-1185">Reference proteome</keyword>
<keyword id="KW-0677">Repeat</keyword>
<keyword id="KW-0808">Transferase</keyword>
<keyword id="KW-0862">Zinc</keyword>
<keyword id="KW-0863">Zinc-finger</keyword>
<evidence type="ECO:0000250" key="1">
    <source>
        <dbReference type="UniProtKB" id="P20192"/>
    </source>
</evidence>
<evidence type="ECO:0000250" key="2">
    <source>
        <dbReference type="UniProtKB" id="P51556"/>
    </source>
</evidence>
<evidence type="ECO:0000255" key="3">
    <source>
        <dbReference type="PROSITE-ProRule" id="PRU00226"/>
    </source>
</evidence>
<evidence type="ECO:0000255" key="4">
    <source>
        <dbReference type="PROSITE-ProRule" id="PRU00448"/>
    </source>
</evidence>
<evidence type="ECO:0000255" key="5">
    <source>
        <dbReference type="PROSITE-ProRule" id="PRU00783"/>
    </source>
</evidence>
<evidence type="ECO:0000269" key="6">
    <source>
    </source>
</evidence>
<evidence type="ECO:0000269" key="7">
    <source>
    </source>
</evidence>
<evidence type="ECO:0000269" key="8">
    <source>
    </source>
</evidence>
<evidence type="ECO:0000269" key="9">
    <source>
    </source>
</evidence>
<evidence type="ECO:0000269" key="10">
    <source>
    </source>
</evidence>
<evidence type="ECO:0000303" key="11">
    <source ref="2"/>
</evidence>
<evidence type="ECO:0000303" key="12">
    <source ref="3"/>
</evidence>
<evidence type="ECO:0000305" key="13"/>
<evidence type="ECO:0000305" key="14">
    <source>
    </source>
</evidence>
<evidence type="ECO:0000305" key="15">
    <source>
    </source>
</evidence>
<evidence type="ECO:0000305" key="16">
    <source>
    </source>
</evidence>
<evidence type="ECO:0007744" key="17">
    <source>
        <dbReference type="PDB" id="6IIE"/>
    </source>
</evidence>
<evidence type="ECO:0007744" key="18">
    <source>
    </source>
</evidence>
<evidence type="ECO:0007829" key="19">
    <source>
        <dbReference type="PDB" id="1TUZ"/>
    </source>
</evidence>
<evidence type="ECO:0007829" key="20">
    <source>
        <dbReference type="PDB" id="6IIE"/>
    </source>
</evidence>
<organism>
    <name type="scientific">Homo sapiens</name>
    <name type="common">Human</name>
    <dbReference type="NCBI Taxonomy" id="9606"/>
    <lineage>
        <taxon>Eukaryota</taxon>
        <taxon>Metazoa</taxon>
        <taxon>Chordata</taxon>
        <taxon>Craniata</taxon>
        <taxon>Vertebrata</taxon>
        <taxon>Euteleostomi</taxon>
        <taxon>Mammalia</taxon>
        <taxon>Eutheria</taxon>
        <taxon>Euarchontoglires</taxon>
        <taxon>Primates</taxon>
        <taxon>Haplorrhini</taxon>
        <taxon>Catarrhini</taxon>
        <taxon>Hominidae</taxon>
        <taxon>Homo</taxon>
    </lineage>
</organism>
<name>DGKA_HUMAN</name>